<dbReference type="EC" id="6.1.1.18" evidence="1"/>
<dbReference type="EMBL" id="CP000057">
    <property type="protein sequence ID" value="AAX88583.1"/>
    <property type="molecule type" value="Genomic_DNA"/>
</dbReference>
<dbReference type="SMR" id="Q4QK64"/>
<dbReference type="KEGG" id="hit:NTHI1812"/>
<dbReference type="HOGENOM" id="CLU_001882_2_3_6"/>
<dbReference type="Proteomes" id="UP000002525">
    <property type="component" value="Chromosome"/>
</dbReference>
<dbReference type="GO" id="GO:0005829">
    <property type="term" value="C:cytosol"/>
    <property type="evidence" value="ECO:0007669"/>
    <property type="project" value="TreeGrafter"/>
</dbReference>
<dbReference type="GO" id="GO:0005524">
    <property type="term" value="F:ATP binding"/>
    <property type="evidence" value="ECO:0007669"/>
    <property type="project" value="UniProtKB-UniRule"/>
</dbReference>
<dbReference type="GO" id="GO:0004819">
    <property type="term" value="F:glutamine-tRNA ligase activity"/>
    <property type="evidence" value="ECO:0007669"/>
    <property type="project" value="UniProtKB-UniRule"/>
</dbReference>
<dbReference type="GO" id="GO:0006425">
    <property type="term" value="P:glutaminyl-tRNA aminoacylation"/>
    <property type="evidence" value="ECO:0007669"/>
    <property type="project" value="InterPro"/>
</dbReference>
<dbReference type="GO" id="GO:0006424">
    <property type="term" value="P:glutamyl-tRNA aminoacylation"/>
    <property type="evidence" value="ECO:0007669"/>
    <property type="project" value="UniProtKB-UniRule"/>
</dbReference>
<dbReference type="CDD" id="cd00807">
    <property type="entry name" value="GlnRS_core"/>
    <property type="match status" value="1"/>
</dbReference>
<dbReference type="FunFam" id="1.10.1160.10:FF:000001">
    <property type="entry name" value="Glutamine--tRNA ligase"/>
    <property type="match status" value="1"/>
</dbReference>
<dbReference type="FunFam" id="2.40.240.10:FF:000001">
    <property type="entry name" value="Glutamine--tRNA ligase"/>
    <property type="match status" value="1"/>
</dbReference>
<dbReference type="FunFam" id="2.40.240.10:FF:000003">
    <property type="entry name" value="Glutamine--tRNA ligase"/>
    <property type="match status" value="1"/>
</dbReference>
<dbReference type="FunFam" id="3.90.800.10:FF:000001">
    <property type="entry name" value="Glutamine--tRNA ligase"/>
    <property type="match status" value="1"/>
</dbReference>
<dbReference type="FunFam" id="3.40.50.620:FF:000037">
    <property type="entry name" value="Glutamine--tRNA ligase cytoplasmic"/>
    <property type="match status" value="1"/>
</dbReference>
<dbReference type="Gene3D" id="1.10.1160.10">
    <property type="entry name" value="Glutamyl-trna Synthetase, Domain 2"/>
    <property type="match status" value="1"/>
</dbReference>
<dbReference type="Gene3D" id="3.90.800.10">
    <property type="entry name" value="Glutamyl-tRNA Synthetase, Domain 3"/>
    <property type="match status" value="1"/>
</dbReference>
<dbReference type="Gene3D" id="3.40.50.620">
    <property type="entry name" value="HUPs"/>
    <property type="match status" value="1"/>
</dbReference>
<dbReference type="Gene3D" id="2.40.240.10">
    <property type="entry name" value="Ribosomal Protein L25, Chain P"/>
    <property type="match status" value="2"/>
</dbReference>
<dbReference type="HAMAP" id="MF_00126">
    <property type="entry name" value="Gln_tRNA_synth"/>
    <property type="match status" value="1"/>
</dbReference>
<dbReference type="InterPro" id="IPR001412">
    <property type="entry name" value="aa-tRNA-synth_I_CS"/>
</dbReference>
<dbReference type="InterPro" id="IPR004514">
    <property type="entry name" value="Gln-tRNA-synth"/>
</dbReference>
<dbReference type="InterPro" id="IPR050132">
    <property type="entry name" value="Gln/Glu-tRNA_Ligase"/>
</dbReference>
<dbReference type="InterPro" id="IPR022861">
    <property type="entry name" value="Gln_tRNA_ligase_bac"/>
</dbReference>
<dbReference type="InterPro" id="IPR000924">
    <property type="entry name" value="Glu/Gln-tRNA-synth"/>
</dbReference>
<dbReference type="InterPro" id="IPR020058">
    <property type="entry name" value="Glu/Gln-tRNA-synth_Ib_cat-dom"/>
</dbReference>
<dbReference type="InterPro" id="IPR020059">
    <property type="entry name" value="Glu/Gln-tRNA-synth_Ib_codon-bd"/>
</dbReference>
<dbReference type="InterPro" id="IPR020061">
    <property type="entry name" value="Glu_tRNA_lig_a-bdl"/>
</dbReference>
<dbReference type="InterPro" id="IPR020056">
    <property type="entry name" value="Rbsml_bL25/Gln-tRNA_synth_N"/>
</dbReference>
<dbReference type="InterPro" id="IPR011035">
    <property type="entry name" value="Ribosomal_bL25/Gln-tRNA_synth"/>
</dbReference>
<dbReference type="InterPro" id="IPR014729">
    <property type="entry name" value="Rossmann-like_a/b/a_fold"/>
</dbReference>
<dbReference type="InterPro" id="IPR049437">
    <property type="entry name" value="tRNA-synt_1c_C2"/>
</dbReference>
<dbReference type="NCBIfam" id="TIGR00440">
    <property type="entry name" value="glnS"/>
    <property type="match status" value="1"/>
</dbReference>
<dbReference type="NCBIfam" id="NF011291">
    <property type="entry name" value="PRK14703.1"/>
    <property type="match status" value="1"/>
</dbReference>
<dbReference type="PANTHER" id="PTHR43097:SF5">
    <property type="entry name" value="GLUTAMATE--TRNA LIGASE"/>
    <property type="match status" value="1"/>
</dbReference>
<dbReference type="PANTHER" id="PTHR43097">
    <property type="entry name" value="GLUTAMINE-TRNA LIGASE"/>
    <property type="match status" value="1"/>
</dbReference>
<dbReference type="Pfam" id="PF00749">
    <property type="entry name" value="tRNA-synt_1c"/>
    <property type="match status" value="1"/>
</dbReference>
<dbReference type="Pfam" id="PF03950">
    <property type="entry name" value="tRNA-synt_1c_C"/>
    <property type="match status" value="1"/>
</dbReference>
<dbReference type="Pfam" id="PF20974">
    <property type="entry name" value="tRNA-synt_1c_C2"/>
    <property type="match status" value="1"/>
</dbReference>
<dbReference type="PRINTS" id="PR00987">
    <property type="entry name" value="TRNASYNTHGLU"/>
</dbReference>
<dbReference type="SUPFAM" id="SSF52374">
    <property type="entry name" value="Nucleotidylyl transferase"/>
    <property type="match status" value="1"/>
</dbReference>
<dbReference type="SUPFAM" id="SSF50715">
    <property type="entry name" value="Ribosomal protein L25-like"/>
    <property type="match status" value="1"/>
</dbReference>
<dbReference type="PROSITE" id="PS00178">
    <property type="entry name" value="AA_TRNA_LIGASE_I"/>
    <property type="match status" value="1"/>
</dbReference>
<keyword id="KW-0030">Aminoacyl-tRNA synthetase</keyword>
<keyword id="KW-0067">ATP-binding</keyword>
<keyword id="KW-0963">Cytoplasm</keyword>
<keyword id="KW-0436">Ligase</keyword>
<keyword id="KW-0547">Nucleotide-binding</keyword>
<keyword id="KW-0648">Protein biosynthesis</keyword>
<name>SYQ_HAEI8</name>
<organism>
    <name type="scientific">Haemophilus influenzae (strain 86-028NP)</name>
    <dbReference type="NCBI Taxonomy" id="281310"/>
    <lineage>
        <taxon>Bacteria</taxon>
        <taxon>Pseudomonadati</taxon>
        <taxon>Pseudomonadota</taxon>
        <taxon>Gammaproteobacteria</taxon>
        <taxon>Pasteurellales</taxon>
        <taxon>Pasteurellaceae</taxon>
        <taxon>Haemophilus</taxon>
    </lineage>
</organism>
<sequence>MMSHTETSLGAENTRTHNFITQIIDEDLASGKHKSVHTRFPPEPNGYLHIGHAKSICLNFGLAKEYQGLCNLRFDDTNPVKEDVEYVDSIKADVEWLGFKWEGEPRYASDYFDALYGYAAELIKKGLAYVDELSPDEMREYRGTLTEPGKNSPYRDRTIEENLALFEKMKNGEFAEGKASLRAKIDMASPFMVMRDPVIYRIKFASHHQTGDKWCIYPMYDFTHCISDAIERITHSICTLEFQDNRRLYDWVLENISIERPLPHQYEFSRLNLEGTLTSKRKLLKLVNDEIVDGWNDPRMPTISGLRRRGYTPASLREFCRRIGVTKQDNVVEYSALEACIREDLNENAPRAMAVIDPVRVVIENFESEAVLTAPNHPNRPELGERQLPFTKELYIDRADFREEANKQYKRLVLGKEVRLRNAYVIKAERVEKDANGEITTIFCTYDPETLGKNPADGRKVKGVIHWVSAVNNHPAEFRLYDRLFTVPNPGAEDDIESVLNPNSLVIKQGFVEQSLANAEAEKGYQFEREGYFCADSKDSRPEHLVFNLTVSLKEGF</sequence>
<gene>
    <name evidence="1" type="primary">glnS</name>
    <name type="ordered locus">NTHI1812</name>
</gene>
<reference key="1">
    <citation type="journal article" date="2005" name="J. Bacteriol.">
        <title>Genomic sequence of an otitis media isolate of nontypeable Haemophilus influenzae: comparative study with H. influenzae serotype d, strain KW20.</title>
        <authorList>
            <person name="Harrison A."/>
            <person name="Dyer D.W."/>
            <person name="Gillaspy A."/>
            <person name="Ray W.C."/>
            <person name="Mungur R."/>
            <person name="Carson M.B."/>
            <person name="Zhong H."/>
            <person name="Gipson J."/>
            <person name="Gipson M."/>
            <person name="Johnson L.S."/>
            <person name="Lewis L."/>
            <person name="Bakaletz L.O."/>
            <person name="Munson R.S. Jr."/>
        </authorList>
    </citation>
    <scope>NUCLEOTIDE SEQUENCE [LARGE SCALE GENOMIC DNA]</scope>
    <source>
        <strain>86-028NP</strain>
    </source>
</reference>
<feature type="chain" id="PRO_0000242870" description="Glutamine--tRNA ligase">
    <location>
        <begin position="1"/>
        <end position="557"/>
    </location>
</feature>
<feature type="short sequence motif" description="'HIGH' region" evidence="1">
    <location>
        <begin position="42"/>
        <end position="52"/>
    </location>
</feature>
<feature type="short sequence motif" description="'KMSKS' region" evidence="1">
    <location>
        <begin position="277"/>
        <end position="281"/>
    </location>
</feature>
<feature type="binding site" evidence="1">
    <location>
        <begin position="43"/>
        <end position="45"/>
    </location>
    <ligand>
        <name>ATP</name>
        <dbReference type="ChEBI" id="CHEBI:30616"/>
    </ligand>
</feature>
<feature type="binding site" evidence="1">
    <location>
        <begin position="49"/>
        <end position="55"/>
    </location>
    <ligand>
        <name>ATP</name>
        <dbReference type="ChEBI" id="CHEBI:30616"/>
    </ligand>
</feature>
<feature type="binding site" evidence="1">
    <location>
        <position position="75"/>
    </location>
    <ligand>
        <name>L-glutamine</name>
        <dbReference type="ChEBI" id="CHEBI:58359"/>
    </ligand>
</feature>
<feature type="binding site" evidence="1">
    <location>
        <position position="220"/>
    </location>
    <ligand>
        <name>L-glutamine</name>
        <dbReference type="ChEBI" id="CHEBI:58359"/>
    </ligand>
</feature>
<feature type="binding site" evidence="1">
    <location>
        <position position="239"/>
    </location>
    <ligand>
        <name>ATP</name>
        <dbReference type="ChEBI" id="CHEBI:30616"/>
    </ligand>
</feature>
<feature type="binding site" evidence="1">
    <location>
        <begin position="270"/>
        <end position="271"/>
    </location>
    <ligand>
        <name>ATP</name>
        <dbReference type="ChEBI" id="CHEBI:30616"/>
    </ligand>
</feature>
<comment type="catalytic activity">
    <reaction evidence="1">
        <text>tRNA(Gln) + L-glutamine + ATP = L-glutaminyl-tRNA(Gln) + AMP + diphosphate</text>
        <dbReference type="Rhea" id="RHEA:20121"/>
        <dbReference type="Rhea" id="RHEA-COMP:9662"/>
        <dbReference type="Rhea" id="RHEA-COMP:9681"/>
        <dbReference type="ChEBI" id="CHEBI:30616"/>
        <dbReference type="ChEBI" id="CHEBI:33019"/>
        <dbReference type="ChEBI" id="CHEBI:58359"/>
        <dbReference type="ChEBI" id="CHEBI:78442"/>
        <dbReference type="ChEBI" id="CHEBI:78521"/>
        <dbReference type="ChEBI" id="CHEBI:456215"/>
        <dbReference type="EC" id="6.1.1.18"/>
    </reaction>
</comment>
<comment type="subunit">
    <text evidence="1">Monomer.</text>
</comment>
<comment type="subcellular location">
    <subcellularLocation>
        <location evidence="1">Cytoplasm</location>
    </subcellularLocation>
</comment>
<comment type="similarity">
    <text evidence="1">Belongs to the class-I aminoacyl-tRNA synthetase family.</text>
</comment>
<evidence type="ECO:0000255" key="1">
    <source>
        <dbReference type="HAMAP-Rule" id="MF_00126"/>
    </source>
</evidence>
<accession>Q4QK64</accession>
<proteinExistence type="inferred from homology"/>
<protein>
    <recommendedName>
        <fullName evidence="1">Glutamine--tRNA ligase</fullName>
        <ecNumber evidence="1">6.1.1.18</ecNumber>
    </recommendedName>
    <alternativeName>
        <fullName evidence="1">Glutaminyl-tRNA synthetase</fullName>
        <shortName evidence="1">GlnRS</shortName>
    </alternativeName>
</protein>